<gene>
    <name type="primary">ERA.5</name>
</gene>
<organism>
    <name type="scientific">Bombyx mori</name>
    <name type="common">Silk moth</name>
    <dbReference type="NCBI Taxonomy" id="7091"/>
    <lineage>
        <taxon>Eukaryota</taxon>
        <taxon>Metazoa</taxon>
        <taxon>Ecdysozoa</taxon>
        <taxon>Arthropoda</taxon>
        <taxon>Hexapoda</taxon>
        <taxon>Insecta</taxon>
        <taxon>Pterygota</taxon>
        <taxon>Neoptera</taxon>
        <taxon>Endopterygota</taxon>
        <taxon>Lepidoptera</taxon>
        <taxon>Glossata</taxon>
        <taxon>Ditrysia</taxon>
        <taxon>Bombycoidea</taxon>
        <taxon>Bombycidae</taxon>
        <taxon>Bombycinae</taxon>
        <taxon>Bombyx</taxon>
    </lineage>
</organism>
<evidence type="ECO:0000255" key="1"/>
<evidence type="ECO:0000305" key="2"/>
<feature type="signal peptide" evidence="1">
    <location>
        <begin position="1"/>
        <end position="21"/>
    </location>
</feature>
<feature type="chain" id="PRO_0000005380" description="Chorion class CA protein ERA.5">
    <location>
        <begin position="22"/>
        <end position="119"/>
    </location>
</feature>
<feature type="region of interest" description="Left arm">
    <location>
        <begin position="22"/>
        <end position="55"/>
    </location>
</feature>
<feature type="region of interest" description="Central domain">
    <location>
        <begin position="56"/>
        <end position="103"/>
    </location>
</feature>
<feature type="region of interest" description="Right arm">
    <location>
        <begin position="104"/>
        <end position="119"/>
    </location>
</feature>
<name>CHCA5_BOMMO</name>
<reference key="1">
    <citation type="journal article" date="1991" name="Genetics">
        <title>Sequence identity in an early chorion multigene family is the result of localized gene conversion.</title>
        <authorList>
            <person name="Hibner B.L."/>
            <person name="Burke W.D."/>
            <person name="Eickbush T.H."/>
        </authorList>
    </citation>
    <scope>NUCLEOTIDE SEQUENCE [GENOMIC DNA]</scope>
    <source>
        <strain>703</strain>
    </source>
</reference>
<dbReference type="EMBL" id="X58448">
    <property type="protein sequence ID" value="CAA41354.1"/>
    <property type="molecule type" value="Genomic_DNA"/>
</dbReference>
<dbReference type="PIR" id="S24294">
    <property type="entry name" value="S24294"/>
</dbReference>
<dbReference type="RefSeq" id="NP_001112379.1">
    <property type="nucleotide sequence ID" value="NM_001118907.1"/>
</dbReference>
<dbReference type="EnsemblMetazoa" id="NM_001118907.1">
    <property type="protein sequence ID" value="NP_001112379.1"/>
    <property type="gene ID" value="GeneID_100141510"/>
</dbReference>
<dbReference type="GeneID" id="100141510"/>
<dbReference type="KEGG" id="bmor:100141510"/>
<dbReference type="CTD" id="100141510"/>
<dbReference type="InParanoid" id="Q17214"/>
<dbReference type="OrthoDB" id="660270at7088"/>
<dbReference type="Proteomes" id="UP000005204">
    <property type="component" value="Unassembled WGS sequence"/>
</dbReference>
<dbReference type="GO" id="GO:0042600">
    <property type="term" value="C:egg chorion"/>
    <property type="evidence" value="ECO:0007669"/>
    <property type="project" value="InterPro"/>
</dbReference>
<dbReference type="GO" id="GO:0005213">
    <property type="term" value="F:structural constituent of egg chorion"/>
    <property type="evidence" value="ECO:0007669"/>
    <property type="project" value="InterPro"/>
</dbReference>
<dbReference type="GO" id="GO:0007304">
    <property type="term" value="P:chorion-containing eggshell formation"/>
    <property type="evidence" value="ECO:0007669"/>
    <property type="project" value="InterPro"/>
</dbReference>
<dbReference type="InterPro" id="IPR002635">
    <property type="entry name" value="Chorion"/>
</dbReference>
<dbReference type="Pfam" id="PF01723">
    <property type="entry name" value="Chorion_1"/>
    <property type="match status" value="2"/>
</dbReference>
<keyword id="KW-1185">Reference proteome</keyword>
<keyword id="KW-0677">Repeat</keyword>
<keyword id="KW-0732">Signal</keyword>
<comment type="function">
    <text>This protein is one of many from the eggshell of the silk moth.</text>
</comment>
<comment type="similarity">
    <text evidence="2">Belongs to the chorion protein family.</text>
</comment>
<accession>Q17214</accession>
<protein>
    <recommendedName>
        <fullName>Chorion class CA protein ERA.5</fullName>
    </recommendedName>
</protein>
<sequence>MSTYTFVLFCLQICLIQNVYSQCLGRVGPGGPPVGPYGGPLGGPGYGPVGYGGCGGYGGSGIGNVAVAGELPVAGSSAVMGQVPVIGAVEFAGPACAVGSVSISGACGPTCGCGGSPYY</sequence>
<proteinExistence type="inferred from homology"/>